<reference key="1">
    <citation type="journal article" date="2010" name="Proc. Natl. Acad. Sci. U.S.A.">
        <title>Nitrosopumilus maritimus genome reveals unique mechanisms for nitrification and autotrophy in globally distributed marine crenarchaea.</title>
        <authorList>
            <person name="Walker C.B."/>
            <person name="de la Torre J.R."/>
            <person name="Klotz M.G."/>
            <person name="Urakawa H."/>
            <person name="Pinel N."/>
            <person name="Arp D.J."/>
            <person name="Brochier-Armanet C."/>
            <person name="Chain P.S."/>
            <person name="Chan P.P."/>
            <person name="Gollabgir A."/>
            <person name="Hemp J."/>
            <person name="Hugler M."/>
            <person name="Karr E.A."/>
            <person name="Konneke M."/>
            <person name="Shin M."/>
            <person name="Lawton T.J."/>
            <person name="Lowe T."/>
            <person name="Martens-Habbena W."/>
            <person name="Sayavedra-Soto L.A."/>
            <person name="Lang D."/>
            <person name="Sievert S.M."/>
            <person name="Rosenzweig A.C."/>
            <person name="Manning G."/>
            <person name="Stahl D.A."/>
        </authorList>
    </citation>
    <scope>NUCLEOTIDE SEQUENCE [LARGE SCALE GENOMIC DNA]</scope>
    <source>
        <strain>SCM1</strain>
    </source>
</reference>
<proteinExistence type="inferred from homology"/>
<dbReference type="EC" id="3.4.25.1" evidence="1"/>
<dbReference type="EMBL" id="CP000866">
    <property type="protein sequence ID" value="ABX12590.1"/>
    <property type="molecule type" value="Genomic_DNA"/>
</dbReference>
<dbReference type="RefSeq" id="WP_012215077.1">
    <property type="nucleotide sequence ID" value="NC_010085.1"/>
</dbReference>
<dbReference type="SMR" id="A9A4A1"/>
<dbReference type="FunCoup" id="A9A4A1">
    <property type="interactions" value="173"/>
</dbReference>
<dbReference type="STRING" id="436308.Nmar_0694"/>
<dbReference type="MEROPS" id="T01.002"/>
<dbReference type="EnsemblBacteria" id="ABX12590">
    <property type="protein sequence ID" value="ABX12590"/>
    <property type="gene ID" value="Nmar_0694"/>
</dbReference>
<dbReference type="GeneID" id="5774004"/>
<dbReference type="KEGG" id="nmr:Nmar_0694"/>
<dbReference type="eggNOG" id="arCOG00970">
    <property type="taxonomic scope" value="Archaea"/>
</dbReference>
<dbReference type="HOGENOM" id="CLU_035750_7_2_2"/>
<dbReference type="InParanoid" id="A9A4A1"/>
<dbReference type="PhylomeDB" id="A9A4A1"/>
<dbReference type="Proteomes" id="UP000000792">
    <property type="component" value="Chromosome"/>
</dbReference>
<dbReference type="GO" id="GO:0005829">
    <property type="term" value="C:cytosol"/>
    <property type="evidence" value="ECO:0000318"/>
    <property type="project" value="GO_Central"/>
</dbReference>
<dbReference type="GO" id="GO:0019774">
    <property type="term" value="C:proteasome core complex, beta-subunit complex"/>
    <property type="evidence" value="ECO:0000318"/>
    <property type="project" value="GO_Central"/>
</dbReference>
<dbReference type="GO" id="GO:0004175">
    <property type="term" value="F:endopeptidase activity"/>
    <property type="evidence" value="ECO:0000318"/>
    <property type="project" value="GO_Central"/>
</dbReference>
<dbReference type="GO" id="GO:0004298">
    <property type="term" value="F:threonine-type endopeptidase activity"/>
    <property type="evidence" value="ECO:0007669"/>
    <property type="project" value="UniProtKB-UniRule"/>
</dbReference>
<dbReference type="GO" id="GO:0043161">
    <property type="term" value="P:proteasome-mediated ubiquitin-dependent protein catabolic process"/>
    <property type="evidence" value="ECO:0000318"/>
    <property type="project" value="GO_Central"/>
</dbReference>
<dbReference type="FunFam" id="3.60.20.10:FF:000049">
    <property type="entry name" value="Proteasome subunit beta"/>
    <property type="match status" value="1"/>
</dbReference>
<dbReference type="Gene3D" id="3.60.20.10">
    <property type="entry name" value="Glutamine Phosphoribosylpyrophosphate, subunit 1, domain 1"/>
    <property type="match status" value="1"/>
</dbReference>
<dbReference type="HAMAP" id="MF_02113_A">
    <property type="entry name" value="Proteasome_B_A"/>
    <property type="match status" value="1"/>
</dbReference>
<dbReference type="InterPro" id="IPR029055">
    <property type="entry name" value="Ntn_hydrolases_N"/>
</dbReference>
<dbReference type="InterPro" id="IPR019983">
    <property type="entry name" value="Pept_T1A_Psome_bsu_arc"/>
</dbReference>
<dbReference type="InterPro" id="IPR000243">
    <property type="entry name" value="Pept_T1A_subB"/>
</dbReference>
<dbReference type="InterPro" id="IPR016050">
    <property type="entry name" value="Proteasome_bsu_CS"/>
</dbReference>
<dbReference type="InterPro" id="IPR001353">
    <property type="entry name" value="Proteasome_sua/b"/>
</dbReference>
<dbReference type="InterPro" id="IPR023333">
    <property type="entry name" value="Proteasome_suB-type"/>
</dbReference>
<dbReference type="PANTHER" id="PTHR32194:SF0">
    <property type="entry name" value="ATP-DEPENDENT PROTEASE SUBUNIT HSLV"/>
    <property type="match status" value="1"/>
</dbReference>
<dbReference type="PANTHER" id="PTHR32194">
    <property type="entry name" value="METALLOPROTEASE TLDD"/>
    <property type="match status" value="1"/>
</dbReference>
<dbReference type="Pfam" id="PF00227">
    <property type="entry name" value="Proteasome"/>
    <property type="match status" value="1"/>
</dbReference>
<dbReference type="PRINTS" id="PR00141">
    <property type="entry name" value="PROTEASOME"/>
</dbReference>
<dbReference type="SUPFAM" id="SSF56235">
    <property type="entry name" value="N-terminal nucleophile aminohydrolases (Ntn hydrolases)"/>
    <property type="match status" value="1"/>
</dbReference>
<dbReference type="PROSITE" id="PS00854">
    <property type="entry name" value="PROTEASOME_BETA_1"/>
    <property type="match status" value="1"/>
</dbReference>
<dbReference type="PROSITE" id="PS51476">
    <property type="entry name" value="PROTEASOME_BETA_2"/>
    <property type="match status" value="1"/>
</dbReference>
<gene>
    <name evidence="1" type="primary">psmB1</name>
    <name type="ordered locus">Nmar_0694</name>
</gene>
<feature type="propeptide" id="PRO_0000397388" description="Removed in mature form; by autocatalysis" evidence="1">
    <location>
        <begin position="1"/>
        <end position="8"/>
    </location>
</feature>
<feature type="chain" id="PRO_0000397389" description="Proteasome subunit beta 1">
    <location>
        <begin position="9"/>
        <end position="198"/>
    </location>
</feature>
<feature type="active site" description="Nucleophile" evidence="1">
    <location>
        <position position="9"/>
    </location>
</feature>
<name>PSB1_NITMS</name>
<organism>
    <name type="scientific">Nitrosopumilus maritimus (strain SCM1)</name>
    <dbReference type="NCBI Taxonomy" id="436308"/>
    <lineage>
        <taxon>Archaea</taxon>
        <taxon>Nitrososphaerota</taxon>
        <taxon>Nitrososphaeria</taxon>
        <taxon>Nitrosopumilales</taxon>
        <taxon>Nitrosopumilaceae</taxon>
        <taxon>Nitrosopumilus</taxon>
    </lineage>
</organism>
<comment type="function">
    <text evidence="1">Component of the proteasome core, a large protease complex with broad specificity involved in protein degradation.</text>
</comment>
<comment type="catalytic activity">
    <reaction evidence="1">
        <text>Cleavage of peptide bonds with very broad specificity.</text>
        <dbReference type="EC" id="3.4.25.1"/>
    </reaction>
</comment>
<comment type="activity regulation">
    <text evidence="1">The formation of the proteasomal ATPase PAN-20S proteasome complex, via the docking of the C-termini of PAN into the intersubunit pockets in the alpha-rings, triggers opening of the gate for substrate entry. Interconversion between the open-gate and close-gate conformations leads to a dynamic regulation of the 20S proteasome proteolysis activity.</text>
</comment>
<comment type="subunit">
    <text evidence="1">The 20S proteasome core is composed of 14 alpha and 14 beta subunits that assemble into four stacked heptameric rings, resulting in a barrel-shaped structure. The two inner rings, each composed of seven catalytic beta subunits, are sandwiched by two outer rings, each composed of seven alpha subunits. The catalytic chamber with the active sites is on the inside of the barrel. Has a gated structure, the ends of the cylinder being occluded by the N-termini of the alpha-subunits. Is capped at one or both ends by the proteasome regulatory ATPase, PAN.</text>
</comment>
<comment type="subcellular location">
    <subcellularLocation>
        <location evidence="1">Cytoplasm</location>
    </subcellularLocation>
</comment>
<comment type="similarity">
    <text evidence="1">Belongs to the peptidase T1B family.</text>
</comment>
<evidence type="ECO:0000255" key="1">
    <source>
        <dbReference type="HAMAP-Rule" id="MF_02113"/>
    </source>
</evidence>
<protein>
    <recommendedName>
        <fullName evidence="1">Proteasome subunit beta 1</fullName>
        <ecNumber evidence="1">3.4.25.1</ecNumber>
    </recommendedName>
    <alternativeName>
        <fullName evidence="1">20S proteasome beta subunit 1</fullName>
    </alternativeName>
    <alternativeName>
        <fullName evidence="1">Proteasome core protein PsmB 1</fullName>
    </alternativeName>
</protein>
<keyword id="KW-0068">Autocatalytic cleavage</keyword>
<keyword id="KW-0963">Cytoplasm</keyword>
<keyword id="KW-0378">Hydrolase</keyword>
<keyword id="KW-0645">Protease</keyword>
<keyword id="KW-0647">Proteasome</keyword>
<keyword id="KW-1185">Reference proteome</keyword>
<keyword id="KW-0888">Threonine protease</keyword>
<keyword id="KW-0865">Zymogen</keyword>
<sequence length="198" mass="21330">MSMYMPGATAVGITFDGGVVFASEKRIAFGNFLVSKTTKKTFPITPKVGATCAGLVADMQILSLQIAALAKIRKMELKRDVPPNTVAKMMSNMMYERRYFPLLTQVIVGGVVDKPIMYTLDPLGSVLPDEYAAVGTGAEMALGVLDPQFKPNMTKDEAIDLAKRAVRAASLRDSASGDGVDVLVITKDGTEEFTEEIK</sequence>
<accession>A9A4A1</accession>